<comment type="function">
    <text evidence="1 5">Lysosomal amino acid transporter involved in the activation of mTORC1 in response to amino acid levels. Probably acts as an amino acid sensor of the Rag GTPases and Ragulator complexes, 2 complexes involved in amino acid sensing and activation of mTORC1, a signaling complex promoting cell growth in response to growth factors, energy levels, and amino acids. Following activation by amino acids, the Ragulator and Rag GTPases function as a scaffold recruiting mTORC1 to lysosomes where it is in turn activated. SLC38A9 mediates transport of amino acids with low capacity and specificity with a slight preference for polar amino acids (By similarity). Acts as an arginine sensor (PubMed:33296665). Following activation by arginine binding, mediates transport of L-glutamine, leucine and tyrosine with high efficiency, and is required for the efficient utilization of these amino acids after lysosomal protein degradation (PubMed:33296665). However, the transport mechanism is not well defined and the role of sodium is not clear. Guanine exchange factor (GEF) that, upon arginine binding, stimulates GDP release from RRAGA and therefore activates the Rag GTPase heterodimer and the mTORC1 pathway in response to nutrient sufficiency (By similarity).</text>
</comment>
<comment type="catalytic activity">
    <reaction evidence="5">
        <text>L-leucine(in) = L-leucine(out)</text>
        <dbReference type="Rhea" id="RHEA:73011"/>
        <dbReference type="ChEBI" id="CHEBI:57427"/>
    </reaction>
</comment>
<comment type="catalytic activity">
    <reaction evidence="1">
        <text>L-tyrosine(in) = L-tyrosine(out)</text>
        <dbReference type="Rhea" id="RHEA:68572"/>
        <dbReference type="ChEBI" id="CHEBI:58315"/>
    </reaction>
</comment>
<comment type="catalytic activity">
    <reaction evidence="1">
        <text>L-glutamine(out) = L-glutamine(in)</text>
        <dbReference type="Rhea" id="RHEA:73419"/>
        <dbReference type="ChEBI" id="CHEBI:58359"/>
    </reaction>
</comment>
<comment type="catalytic activity">
    <reaction evidence="1">
        <text>L-asparagine(out) = L-asparagine(in)</text>
        <dbReference type="Rhea" id="RHEA:73423"/>
        <dbReference type="ChEBI" id="CHEBI:58048"/>
    </reaction>
</comment>
<comment type="activity regulation">
    <text evidence="1 4">Amino acid transport activity is increased by sodium (PubMed:29872228). Transport of L-glutamine, leucine and tyrosine is increased by arginine binding (By similarity).</text>
</comment>
<comment type="subunit">
    <text evidence="1 5">Associated component of the Ragulator complex (By similarity). Associated component of the Rag GTPases heterodimers (RRAGA and RRAGC) (PubMed:33296665).</text>
</comment>
<comment type="subcellular location">
    <subcellularLocation>
        <location evidence="1">Lysosome membrane</location>
        <topology evidence="4">Multi-pass membrane protein</topology>
    </subcellularLocation>
    <subcellularLocation>
        <location evidence="1">Late endosome membrane</location>
        <topology evidence="4">Multi-pass membrane protein</topology>
    </subcellularLocation>
</comment>
<comment type="developmental stage">
    <text evidence="6">Expression is ubiquitous from the one-cell stage to 12 hours post-fertilization (hpf), restricted to the retina at 18, 24, and 30 hpf (PubMed:35457018). Expression encompasses the heart and midbrain region at 30 and 48 hpf. From 72 hpf to 5 dpf, the expression is restricted to the liver and gut (PubMed:35457018).</text>
</comment>
<comment type="domain">
    <text evidence="1 5">The cytosolic N-terminus part of the protein mediates interaction with the Ragulator complex (By similarity). The cytosolic N-terminus part of the protein mediates interaction with the Rag GTPase heterodimer in a RRAGA GDP-loaded state dependent and leading to the GDP release and SLC38A9 dissociation from the activated Rag GTPase heterodimer, upon arginine binding (PubMed:33296665). The cytosolic N-terminus part of the protein exists at least in two distinct conformations; The first is when the N-terminus is bound snugly in the arginine binding site (in the absence of arginine, low luminal arginine state) and the second is where the N-terminus is released and the substrate-binding site is occupied by arginine (in the presence of arginine, high luminal arginine state) (PubMed:33296665).</text>
</comment>
<comment type="domain">
    <text evidence="1">The CARC and CRAC motifs mediate binding to cholesterol.</text>
</comment>
<comment type="PTM">
    <text evidence="1">Glycosylated.</text>
</comment>
<comment type="disruption phenotype">
    <text evidence="6">Homozygote knockout fishs for the SLC38A9 show no morphological difference at 12 and 24 hours post-fertilization (hpf) (PubMed:35457018). However, a quarter exhibit pericardial edema and small eyes at 48 hpf; the abnormal phenotypes became severe at 72 hpf (PubMed:35457018). The overall body length is decreased at 24 and 72 hpf (PubMed:35457018). While mutant larvae with development defects died at 4-7 dpf, those normally developed have the same viability as wide type and exhibit normal fertility (PubMed:35457018).</text>
</comment>
<comment type="similarity">
    <text evidence="7">Belongs to the amino acid/polyamine transporter 2 family. SLC38A9 subfamily.</text>
</comment>
<reference key="1">
    <citation type="submission" date="2006-10" db="EMBL/GenBank/DDBJ databases">
        <authorList>
            <consortium name="NIH - Zebrafish Gene Collection (ZGC) project"/>
        </authorList>
    </citation>
    <scope>NUCLEOTIDE SEQUENCE [LARGE SCALE MRNA]</scope>
    <source>
        <tissue>Ovary</tissue>
    </source>
</reference>
<reference key="2">
    <citation type="journal article" date="2022" name="Int. J. Mol. Sci.">
        <title>Slc38a9 Deficiency Induces Apoptosis and Metabolic Dysregulation and Leads to Premature Death in Zebrafish.</title>
        <authorList>
            <person name="Wu X."/>
            <person name="Chen J."/>
            <person name="Liu C."/>
            <person name="Wang X."/>
            <person name="Zhou H."/>
            <person name="Mai K."/>
            <person name="He G."/>
        </authorList>
    </citation>
    <scope>DEVELOPMENTAL STAGE</scope>
    <scope>DISRUPTION PHENOTYPE</scope>
</reference>
<reference evidence="8" key="3">
    <citation type="journal article" date="2018" name="Nat. Struct. Mol. Biol.">
        <title>Crystal structure of arginine-bound lysosomal transporter SLC38A9 in the cytosol-open state.</title>
        <authorList>
            <person name="Lei H.T."/>
            <person name="Ma J."/>
            <person name="Sanchez Martinez S."/>
            <person name="Gonen T."/>
        </authorList>
    </citation>
    <scope>X-RAY CRYSTALLOGRAPHY (3.17 ANGSTROMS) OF 71-549 IN COMPLEX WITH ARGININE</scope>
    <scope>ACTIVITY REGULATION</scope>
    <scope>TOPOLOGY</scope>
    <scope>MUTAGENESIS OF MET-118 AND MET-119</scope>
    <scope>DISULFIDE BONDS</scope>
</reference>
<reference evidence="9" key="4">
    <citation type="journal article" date="2021" name="Structure">
        <title>A conformational change in the N terminus of SLC38A9 signals mTORC1 activation.</title>
        <authorList>
            <person name="Lei H.T."/>
            <person name="Mu X."/>
            <person name="Hattne J."/>
            <person name="Gonen T."/>
        </authorList>
    </citation>
    <scope>X-RAY CRYSTALLOGRAPHY (3.40 ANGSTROMS)</scope>
    <scope>MUTAGENESIS OF VAL-77; PRO-79; SER-80; HIS-81; GLU-82; TYR-85 AND TYR-87</scope>
    <scope>FUNCTION</scope>
    <scope>TRANSPORTER ACTIVITY</scope>
    <scope>BIOPHYSICOCHEMICAL PROPERTIES</scope>
    <scope>SUBUNIT</scope>
    <scope>DOMAIN</scope>
</reference>
<organism>
    <name type="scientific">Danio rerio</name>
    <name type="common">Zebrafish</name>
    <name type="synonym">Brachydanio rerio</name>
    <dbReference type="NCBI Taxonomy" id="7955"/>
    <lineage>
        <taxon>Eukaryota</taxon>
        <taxon>Metazoa</taxon>
        <taxon>Chordata</taxon>
        <taxon>Craniata</taxon>
        <taxon>Vertebrata</taxon>
        <taxon>Euteleostomi</taxon>
        <taxon>Actinopterygii</taxon>
        <taxon>Neopterygii</taxon>
        <taxon>Teleostei</taxon>
        <taxon>Ostariophysi</taxon>
        <taxon>Cypriniformes</taxon>
        <taxon>Danionidae</taxon>
        <taxon>Danioninae</taxon>
        <taxon>Danio</taxon>
    </lineage>
</organism>
<sequence length="549" mass="61897">MDEDSKPLLGSVPTGDYYTDSLDPKQRRPFHVEPRNIVGEDVQERVSAEAAVLSSRVHYYSRLTGSSDRLLAPPDHVIPSHEDIYIYSPLGTAFKVQGGDSPIKNPSIVTIFAIWNTMMGTSILSIPWGIKQAGFTLGIIIIVLMGLLTLYCCYRVLKSTKSIPYVDTSDWEFPDVCKYYFGGFGKWSSLVFSLVSLIGAMVVYWVLMSNFLFNTGKFIFNYVHNVNTSDAFGTNGTERVICPYPDVDPHGNSSTSLYSGSDNSTGLEFDHWWSKTNTIPFYLILLLLPLLNFRSASFFARFTFLGTISVIYLIFLVTYKAIQLGFHLEFHWFDSSMFFVPEFRTLFPQLSGVLTLAFFIHNCIITLMKNNKHQENNVRDLSLAYLLVGLTYLYVGVLIFAAFPSPPLSKECIEPNFLDNFPSSDILVFVARTFLLFQMTTVYPLLGYLVRVQLMGQIFGNHYPGFLHVFVLNVFVVGAGVLMARFYPNIGSIIRYSGALCGLALVFVLPSLIHMVSLKRRGELRWTSTLFHGFLILLGVANLLGQFFM</sequence>
<evidence type="ECO:0000250" key="1">
    <source>
        <dbReference type="UniProtKB" id="Q8NBW4"/>
    </source>
</evidence>
<evidence type="ECO:0000255" key="2">
    <source>
        <dbReference type="PROSITE-ProRule" id="PRU00498"/>
    </source>
</evidence>
<evidence type="ECO:0000256" key="3">
    <source>
        <dbReference type="SAM" id="MobiDB-lite"/>
    </source>
</evidence>
<evidence type="ECO:0000269" key="4">
    <source>
    </source>
</evidence>
<evidence type="ECO:0000269" key="5">
    <source>
    </source>
</evidence>
<evidence type="ECO:0000269" key="6">
    <source>
    </source>
</evidence>
<evidence type="ECO:0000305" key="7"/>
<evidence type="ECO:0007744" key="8">
    <source>
        <dbReference type="PDB" id="6C08"/>
    </source>
</evidence>
<evidence type="ECO:0007744" key="9">
    <source>
        <dbReference type="PDB" id="7KGV"/>
    </source>
</evidence>
<evidence type="ECO:0007829" key="10">
    <source>
        <dbReference type="PDB" id="6C08"/>
    </source>
</evidence>
<evidence type="ECO:0007829" key="11">
    <source>
        <dbReference type="PDB" id="7KGV"/>
    </source>
</evidence>
<accession>Q08BA4</accession>
<proteinExistence type="evidence at protein level"/>
<keyword id="KW-0002">3D-structure</keyword>
<keyword id="KW-0029">Amino-acid transport</keyword>
<keyword id="KW-1015">Disulfide bond</keyword>
<keyword id="KW-0967">Endosome</keyword>
<keyword id="KW-0325">Glycoprotein</keyword>
<keyword id="KW-0458">Lysosome</keyword>
<keyword id="KW-0472">Membrane</keyword>
<keyword id="KW-0479">Metal-binding</keyword>
<keyword id="KW-1185">Reference proteome</keyword>
<keyword id="KW-0915">Sodium</keyword>
<keyword id="KW-0812">Transmembrane</keyword>
<keyword id="KW-1133">Transmembrane helix</keyword>
<keyword id="KW-0813">Transport</keyword>
<feature type="chain" id="PRO_0000328843" description="Neutral amino acid transporter 9">
    <location>
        <begin position="1"/>
        <end position="549"/>
    </location>
</feature>
<feature type="topological domain" description="Cytoplasmic" evidence="4">
    <location>
        <begin position="1"/>
        <end position="107"/>
    </location>
</feature>
<feature type="transmembrane region" description="Helical; Name=1" evidence="4">
    <location>
        <begin position="108"/>
        <end position="128"/>
    </location>
</feature>
<feature type="topological domain" description="Lumenal" evidence="4">
    <location>
        <begin position="129"/>
        <end position="134"/>
    </location>
</feature>
<feature type="transmembrane region" description="Helical; Name=2" evidence="4">
    <location>
        <begin position="135"/>
        <end position="155"/>
    </location>
</feature>
<feature type="topological domain" description="Cytoplasmic" evidence="4">
    <location>
        <begin position="156"/>
        <end position="186"/>
    </location>
</feature>
<feature type="transmembrane region" description="Helical; Name=3" evidence="4">
    <location>
        <begin position="187"/>
        <end position="213"/>
    </location>
</feature>
<feature type="topological domain" description="Lumenal" evidence="4">
    <location>
        <begin position="214"/>
        <end position="271"/>
    </location>
</feature>
<feature type="transmembrane region" description="Helical; Name=4" evidence="4">
    <location>
        <begin position="272"/>
        <end position="288"/>
    </location>
</feature>
<feature type="topological domain" description="Cytoplasmic" evidence="4">
    <location>
        <begin position="289"/>
        <end position="297"/>
    </location>
</feature>
<feature type="transmembrane region" description="Helical; Name=5" evidence="4">
    <location>
        <begin position="298"/>
        <end position="322"/>
    </location>
</feature>
<feature type="topological domain" description="Lumenal" evidence="4">
    <location>
        <begin position="323"/>
        <end position="344"/>
    </location>
</feature>
<feature type="transmembrane region" description="Helical; Name=6" evidence="4">
    <location>
        <begin position="345"/>
        <end position="365"/>
    </location>
</feature>
<feature type="topological domain" description="Cytoplasmic" evidence="4">
    <location>
        <begin position="366"/>
        <end position="382"/>
    </location>
</feature>
<feature type="transmembrane region" description="Helical; Name=7" evidence="4">
    <location>
        <begin position="383"/>
        <end position="403"/>
    </location>
</feature>
<feature type="topological domain" description="Lumenal" evidence="4">
    <location>
        <begin position="404"/>
        <end position="425"/>
    </location>
</feature>
<feature type="transmembrane region" description="Helical; Name=8" evidence="4">
    <location>
        <begin position="426"/>
        <end position="446"/>
    </location>
</feature>
<feature type="topological domain" description="Cytoplasmic" evidence="4">
    <location>
        <begin position="447"/>
        <end position="467"/>
    </location>
</feature>
<feature type="transmembrane region" description="Helical; Name=9" evidence="4">
    <location>
        <begin position="468"/>
        <end position="488"/>
    </location>
</feature>
<feature type="topological domain" description="Lumenal" evidence="4">
    <location>
        <begin position="489"/>
        <end position="495"/>
    </location>
</feature>
<feature type="transmembrane region" description="Helical; Name=10" evidence="4">
    <location>
        <begin position="496"/>
        <end position="516"/>
    </location>
</feature>
<feature type="topological domain" description="Cytoplasmic" evidence="4">
    <location>
        <begin position="517"/>
        <end position="528"/>
    </location>
</feature>
<feature type="transmembrane region" description="Helical; Name=11" evidence="4">
    <location>
        <begin position="529"/>
        <end position="549"/>
    </location>
</feature>
<feature type="region of interest" description="Disordered" evidence="3">
    <location>
        <begin position="1"/>
        <end position="27"/>
    </location>
</feature>
<feature type="region of interest" description="Important for arginine binding and amino acid transport" evidence="4">
    <location>
        <begin position="117"/>
        <end position="122"/>
    </location>
</feature>
<feature type="short sequence motif" description="CARC motif" evidence="1">
    <location>
        <begin position="432"/>
        <end position="442"/>
    </location>
</feature>
<feature type="short sequence motif" description="CRAC motif" evidence="1">
    <location>
        <begin position="445"/>
        <end position="451"/>
    </location>
</feature>
<feature type="binding site" evidence="4 8">
    <location>
        <position position="122"/>
    </location>
    <ligand>
        <name>arginine</name>
        <dbReference type="ChEBI" id="CHEBI:32696"/>
    </ligand>
</feature>
<feature type="glycosylation site" description="N-linked (GlcNAc...) asparagine" evidence="2">
    <location>
        <position position="227"/>
    </location>
</feature>
<feature type="glycosylation site" description="N-linked (GlcNAc...) asparagine" evidence="2">
    <location>
        <position position="235"/>
    </location>
</feature>
<feature type="glycosylation site" description="N-linked (GlcNAc...) asparagine" evidence="2">
    <location>
        <position position="252"/>
    </location>
</feature>
<feature type="glycosylation site" description="N-linked (GlcNAc...) asparagine" evidence="2">
    <location>
        <position position="263"/>
    </location>
</feature>
<feature type="disulfide bond" evidence="4 8">
    <location>
        <begin position="242"/>
        <end position="412"/>
    </location>
</feature>
<feature type="mutagenesis site" description="Increases arginine transport. Deacreases affinity for arginine; when associated with W-81 and F-87." evidence="5">
    <original>V</original>
    <variation>W</variation>
    <location>
        <position position="77"/>
    </location>
</feature>
<feature type="mutagenesis site" description="Loss of L-arginine-enhanced L-leucine transport; when associated with A-80; A-81; A-82 and A-85." evidence="5">
    <original>P</original>
    <variation>A</variation>
    <location>
        <position position="79"/>
    </location>
</feature>
<feature type="mutagenesis site" description="Loss of L-arginine-enhanced L-leucine transport; when associated with A-79; A-81; A-82 and A-85." evidence="5">
    <original>S</original>
    <variation>A</variation>
    <location>
        <position position="80"/>
    </location>
</feature>
<feature type="mutagenesis site" description="Loss of L-arginine-enhanced L-leucine transport; when associated with A-79; A-80; A-82 and A-85." evidence="5">
    <original>H</original>
    <variation>A</variation>
    <location>
        <position position="81"/>
    </location>
</feature>
<feature type="mutagenesis site" description="Increases arginine transport. Deacreases affinity for arginine; when associated with W-77and F-87." evidence="5">
    <original>H</original>
    <variation>W</variation>
    <location>
        <position position="81"/>
    </location>
</feature>
<feature type="mutagenesis site" description="Loss of L-arginine-enhanced L-leucine transport; when associated with A-79; A-80; A-81 and A-85." evidence="5">
    <original>E</original>
    <variation>A</variation>
    <location>
        <position position="82"/>
    </location>
</feature>
<feature type="mutagenesis site" description="Loss of L-arginine-enhanced L-leucine transport; when associated with A-79; A-80; A-81 and A-82." evidence="5">
    <original>Y</original>
    <variation>A</variation>
    <location>
        <position position="85"/>
    </location>
</feature>
<feature type="mutagenesis site" description="Increases arginine transport. Deacreases affinity for arginine; when associated with W-77 and W-81." evidence="5">
    <original>Y</original>
    <variation>F</variation>
    <location>
        <position position="87"/>
    </location>
</feature>
<feature type="mutagenesis site" description="Loss of arginine transport." evidence="4">
    <original>M</original>
    <variation>A</variation>
    <location>
        <position position="118"/>
    </location>
</feature>
<feature type="mutagenesis site" description="Loss of arginine transport." evidence="4">
    <original>M</original>
    <variation>A</variation>
    <location>
        <position position="119"/>
    </location>
</feature>
<feature type="helix" evidence="10">
    <location>
        <begin position="109"/>
        <end position="118"/>
    </location>
</feature>
<feature type="helix" evidence="10">
    <location>
        <begin position="122"/>
        <end position="125"/>
    </location>
</feature>
<feature type="helix" evidence="10">
    <location>
        <begin position="126"/>
        <end position="133"/>
    </location>
</feature>
<feature type="helix" evidence="10">
    <location>
        <begin position="135"/>
        <end position="154"/>
    </location>
</feature>
<feature type="strand" evidence="10">
    <location>
        <begin position="163"/>
        <end position="165"/>
    </location>
</feature>
<feature type="helix" evidence="10">
    <location>
        <begin position="178"/>
        <end position="180"/>
    </location>
</feature>
<feature type="helix" evidence="10">
    <location>
        <begin position="188"/>
        <end position="217"/>
    </location>
</feature>
<feature type="helix" evidence="10">
    <location>
        <begin position="267"/>
        <end position="270"/>
    </location>
</feature>
<feature type="helix" evidence="10">
    <location>
        <begin position="275"/>
        <end position="284"/>
    </location>
</feature>
<feature type="helix" evidence="10">
    <location>
        <begin position="296"/>
        <end position="301"/>
    </location>
</feature>
<feature type="helix" evidence="10">
    <location>
        <begin position="304"/>
        <end position="324"/>
    </location>
</feature>
<feature type="strand" evidence="11">
    <location>
        <begin position="332"/>
        <end position="334"/>
    </location>
</feature>
<feature type="helix" evidence="10">
    <location>
        <begin position="347"/>
        <end position="355"/>
    </location>
</feature>
<feature type="helix" evidence="10">
    <location>
        <begin position="356"/>
        <end position="358"/>
    </location>
</feature>
<feature type="turn" evidence="10">
    <location>
        <begin position="359"/>
        <end position="362"/>
    </location>
</feature>
<feature type="helix" evidence="10">
    <location>
        <begin position="365"/>
        <end position="368"/>
    </location>
</feature>
<feature type="helix" evidence="10">
    <location>
        <begin position="378"/>
        <end position="402"/>
    </location>
</feature>
<feature type="turn" evidence="10">
    <location>
        <begin position="405"/>
        <end position="407"/>
    </location>
</feature>
<feature type="helix" evidence="11">
    <location>
        <begin position="410"/>
        <end position="412"/>
    </location>
</feature>
<feature type="strand" evidence="10">
    <location>
        <begin position="415"/>
        <end position="417"/>
    </location>
</feature>
<feature type="helix" evidence="10">
    <location>
        <begin position="418"/>
        <end position="420"/>
    </location>
</feature>
<feature type="helix" evidence="10">
    <location>
        <begin position="426"/>
        <end position="447"/>
    </location>
</feature>
<feature type="turn" evidence="10">
    <location>
        <begin position="448"/>
        <end position="450"/>
    </location>
</feature>
<feature type="helix" evidence="10">
    <location>
        <begin position="451"/>
        <end position="456"/>
    </location>
</feature>
<feature type="helix" evidence="10">
    <location>
        <begin position="472"/>
        <end position="485"/>
    </location>
</feature>
<feature type="helix" evidence="10">
    <location>
        <begin position="490"/>
        <end position="492"/>
    </location>
</feature>
<feature type="turn" evidence="10">
    <location>
        <begin position="493"/>
        <end position="495"/>
    </location>
</feature>
<feature type="helix" evidence="10">
    <location>
        <begin position="496"/>
        <end position="504"/>
    </location>
</feature>
<feature type="turn" evidence="10">
    <location>
        <begin position="505"/>
        <end position="507"/>
    </location>
</feature>
<feature type="helix" evidence="10">
    <location>
        <begin position="508"/>
        <end position="516"/>
    </location>
</feature>
<feature type="helix" evidence="10">
    <location>
        <begin position="528"/>
        <end position="547"/>
    </location>
</feature>
<name>S38A9_DANRE</name>
<protein>
    <recommendedName>
        <fullName evidence="1">Neutral amino acid transporter 9</fullName>
    </recommendedName>
    <alternativeName>
        <fullName>Solute carrier family 38 member 9</fullName>
    </alternativeName>
</protein>
<gene>
    <name evidence="1" type="primary">slc38a9</name>
    <name type="ORF">zgc:154088</name>
</gene>
<dbReference type="EMBL" id="BC124808">
    <property type="protein sequence ID" value="AAI24809.1"/>
    <property type="molecule type" value="mRNA"/>
</dbReference>
<dbReference type="RefSeq" id="NP_001073468.1">
    <property type="nucleotide sequence ID" value="NM_001079999.1"/>
</dbReference>
<dbReference type="PDB" id="6C08">
    <property type="method" value="X-ray"/>
    <property type="resolution" value="3.17 A"/>
    <property type="chains" value="C/F=71-549"/>
</dbReference>
<dbReference type="PDB" id="7KGV">
    <property type="method" value="X-ray"/>
    <property type="resolution" value="3.40 A"/>
    <property type="chains" value="A/B=1-549"/>
</dbReference>
<dbReference type="PDBsum" id="6C08"/>
<dbReference type="PDBsum" id="7KGV"/>
<dbReference type="SMR" id="Q08BA4"/>
<dbReference type="FunCoup" id="Q08BA4">
    <property type="interactions" value="939"/>
</dbReference>
<dbReference type="STRING" id="7955.ENSDARP00000041067"/>
<dbReference type="TCDB" id="2.A.18.9.2">
    <property type="family name" value="the amino acid/auxin permease (aaap) family"/>
</dbReference>
<dbReference type="GlyCosmos" id="Q08BA4">
    <property type="glycosylation" value="4 sites, No reported glycans"/>
</dbReference>
<dbReference type="PaxDb" id="7955-ENSDARP00000041067"/>
<dbReference type="ABCD" id="Q08BA4">
    <property type="antibodies" value="1 sequenced antibody"/>
</dbReference>
<dbReference type="Ensembl" id="ENSDART00000041068">
    <property type="protein sequence ID" value="ENSDARP00000041067"/>
    <property type="gene ID" value="ENSDARG00000032769"/>
</dbReference>
<dbReference type="GeneID" id="562137"/>
<dbReference type="KEGG" id="dre:562137"/>
<dbReference type="AGR" id="ZFIN:ZDB-GENE-061013-597"/>
<dbReference type="CTD" id="153129"/>
<dbReference type="ZFIN" id="ZDB-GENE-061013-597">
    <property type="gene designation" value="slc38a9"/>
</dbReference>
<dbReference type="eggNOG" id="KOG1305">
    <property type="taxonomic scope" value="Eukaryota"/>
</dbReference>
<dbReference type="HOGENOM" id="CLU_037564_0_0_1"/>
<dbReference type="InParanoid" id="Q08BA4"/>
<dbReference type="OMA" id="HWFTPTE"/>
<dbReference type="OrthoDB" id="294730at2759"/>
<dbReference type="PhylomeDB" id="Q08BA4"/>
<dbReference type="TreeFam" id="TF312989"/>
<dbReference type="Reactome" id="R-DRE-1632852">
    <property type="pathway name" value="Macroautophagy"/>
</dbReference>
<dbReference type="Reactome" id="R-DRE-165159">
    <property type="pathway name" value="MTOR signalling"/>
</dbReference>
<dbReference type="Reactome" id="R-DRE-166208">
    <property type="pathway name" value="mTORC1-mediated signalling"/>
</dbReference>
<dbReference type="Reactome" id="R-DRE-380972">
    <property type="pathway name" value="Energy dependent regulation of mTOR by LKB1-AMPK"/>
</dbReference>
<dbReference type="Reactome" id="R-DRE-5628897">
    <property type="pathway name" value="TP53 Regulates Metabolic Genes"/>
</dbReference>
<dbReference type="Reactome" id="R-DRE-8943724">
    <property type="pathway name" value="Regulation of PTEN gene transcription"/>
</dbReference>
<dbReference type="Reactome" id="R-DRE-9639288">
    <property type="pathway name" value="Amino acids regulate mTORC1"/>
</dbReference>
<dbReference type="PRO" id="PR:Q08BA4"/>
<dbReference type="Proteomes" id="UP000000437">
    <property type="component" value="Chromosome 10"/>
</dbReference>
<dbReference type="Bgee" id="ENSDARG00000032769">
    <property type="expression patterns" value="Expressed in mature ovarian follicle and 20 other cell types or tissues"/>
</dbReference>
<dbReference type="GO" id="GO:0005770">
    <property type="term" value="C:late endosome"/>
    <property type="evidence" value="ECO:0000250"/>
    <property type="project" value="UniProtKB"/>
</dbReference>
<dbReference type="GO" id="GO:0031902">
    <property type="term" value="C:late endosome membrane"/>
    <property type="evidence" value="ECO:0007669"/>
    <property type="project" value="UniProtKB-SubCell"/>
</dbReference>
<dbReference type="GO" id="GO:0005765">
    <property type="term" value="C:lysosomal membrane"/>
    <property type="evidence" value="ECO:0000318"/>
    <property type="project" value="GO_Central"/>
</dbReference>
<dbReference type="GO" id="GO:0005764">
    <property type="term" value="C:lysosome"/>
    <property type="evidence" value="ECO:0000250"/>
    <property type="project" value="UniProtKB"/>
</dbReference>
<dbReference type="GO" id="GO:0016020">
    <property type="term" value="C:membrane"/>
    <property type="evidence" value="ECO:0000314"/>
    <property type="project" value="ZFIN"/>
</dbReference>
<dbReference type="GO" id="GO:0140785">
    <property type="term" value="F:amino acid sensor activity"/>
    <property type="evidence" value="ECO:0000314"/>
    <property type="project" value="UniProtKB"/>
</dbReference>
<dbReference type="GO" id="GO:0015171">
    <property type="term" value="F:amino acid transmembrane transporter activity"/>
    <property type="evidence" value="ECO:0000250"/>
    <property type="project" value="UniProtKB"/>
</dbReference>
<dbReference type="GO" id="GO:0034618">
    <property type="term" value="F:arginine binding"/>
    <property type="evidence" value="ECO:0000314"/>
    <property type="project" value="UniProtKB"/>
</dbReference>
<dbReference type="GO" id="GO:0015485">
    <property type="term" value="F:cholesterol binding"/>
    <property type="evidence" value="ECO:0000250"/>
    <property type="project" value="UniProtKB"/>
</dbReference>
<dbReference type="GO" id="GO:0005085">
    <property type="term" value="F:guanyl-nucleotide exchange factor activity"/>
    <property type="evidence" value="ECO:0000250"/>
    <property type="project" value="UniProtKB"/>
</dbReference>
<dbReference type="GO" id="GO:0015179">
    <property type="term" value="F:L-amino acid transmembrane transporter activity"/>
    <property type="evidence" value="ECO:0000318"/>
    <property type="project" value="GO_Central"/>
</dbReference>
<dbReference type="GO" id="GO:0061459">
    <property type="term" value="F:L-arginine transmembrane transporter activity"/>
    <property type="evidence" value="ECO:0000314"/>
    <property type="project" value="ZFIN"/>
</dbReference>
<dbReference type="GO" id="GO:0015182">
    <property type="term" value="F:L-asparagine transmembrane transporter activity"/>
    <property type="evidence" value="ECO:0000250"/>
    <property type="project" value="UniProtKB"/>
</dbReference>
<dbReference type="GO" id="GO:0015186">
    <property type="term" value="F:L-glutamine transmembrane transporter activity"/>
    <property type="evidence" value="ECO:0000250"/>
    <property type="project" value="UniProtKB"/>
</dbReference>
<dbReference type="GO" id="GO:0015190">
    <property type="term" value="F:L-leucine transmembrane transporter activity"/>
    <property type="evidence" value="ECO:0000314"/>
    <property type="project" value="UniProtKB"/>
</dbReference>
<dbReference type="GO" id="GO:0046872">
    <property type="term" value="F:metal ion binding"/>
    <property type="evidence" value="ECO:0007669"/>
    <property type="project" value="UniProtKB-KW"/>
</dbReference>
<dbReference type="GO" id="GO:0032935">
    <property type="term" value="F:sterol sensor activity"/>
    <property type="evidence" value="ECO:0000250"/>
    <property type="project" value="UniProtKB"/>
</dbReference>
<dbReference type="GO" id="GO:0006520">
    <property type="term" value="P:amino acid metabolic process"/>
    <property type="evidence" value="ECO:0000315"/>
    <property type="project" value="ZFIN"/>
</dbReference>
<dbReference type="GO" id="GO:0003333">
    <property type="term" value="P:amino acid transmembrane transport"/>
    <property type="evidence" value="ECO:0000250"/>
    <property type="project" value="UniProtKB"/>
</dbReference>
<dbReference type="GO" id="GO:0006867">
    <property type="term" value="P:asparagine transport"/>
    <property type="evidence" value="ECO:0000250"/>
    <property type="project" value="UniProtKB"/>
</dbReference>
<dbReference type="GO" id="GO:0071230">
    <property type="term" value="P:cellular response to amino acid stimulus"/>
    <property type="evidence" value="ECO:0000250"/>
    <property type="project" value="UniProtKB"/>
</dbReference>
<dbReference type="GO" id="GO:0006868">
    <property type="term" value="P:glutamine transport"/>
    <property type="evidence" value="ECO:0000250"/>
    <property type="project" value="UniProtKB"/>
</dbReference>
<dbReference type="GO" id="GO:1903826">
    <property type="term" value="P:L-arginine transmembrane transport"/>
    <property type="evidence" value="ECO:0000250"/>
    <property type="project" value="UniProtKB"/>
</dbReference>
<dbReference type="GO" id="GO:0015820">
    <property type="term" value="P:L-leucine transport"/>
    <property type="evidence" value="ECO:0000314"/>
    <property type="project" value="UniProtKB"/>
</dbReference>
<dbReference type="GO" id="GO:0032008">
    <property type="term" value="P:positive regulation of TOR signaling"/>
    <property type="evidence" value="ECO:0000250"/>
    <property type="project" value="UniProtKB"/>
</dbReference>
<dbReference type="GO" id="GO:1904263">
    <property type="term" value="P:positive regulation of TORC1 signaling"/>
    <property type="evidence" value="ECO:0000250"/>
    <property type="project" value="UniProtKB"/>
</dbReference>
<dbReference type="GO" id="GO:1900037">
    <property type="term" value="P:regulation of cellular response to hypoxia"/>
    <property type="evidence" value="ECO:0000315"/>
    <property type="project" value="ZFIN"/>
</dbReference>
<dbReference type="GO" id="GO:0006111">
    <property type="term" value="P:regulation of gluconeogenesis"/>
    <property type="evidence" value="ECO:0000315"/>
    <property type="project" value="ZFIN"/>
</dbReference>
<dbReference type="GO" id="GO:0006110">
    <property type="term" value="P:regulation of glycolytic process"/>
    <property type="evidence" value="ECO:0000315"/>
    <property type="project" value="ZFIN"/>
</dbReference>
<dbReference type="InterPro" id="IPR013057">
    <property type="entry name" value="AA_transpt_TM"/>
</dbReference>
<dbReference type="PANTHER" id="PTHR22950">
    <property type="entry name" value="AMINO ACID TRANSPORTER"/>
    <property type="match status" value="1"/>
</dbReference>
<dbReference type="PANTHER" id="PTHR22950:SF244">
    <property type="entry name" value="NEUTRAL AMINO ACID TRANSPORTER 9"/>
    <property type="match status" value="1"/>
</dbReference>
<dbReference type="Pfam" id="PF01490">
    <property type="entry name" value="Aa_trans"/>
    <property type="match status" value="2"/>
</dbReference>